<proteinExistence type="evidence at protein level"/>
<comment type="function">
    <text evidence="3 4">Non-mitochondrial 3-hydroxy-3-methylglutaryl-CoA lyase that catalyzes a cation-dependent cleavage of (S)-3-hydroxy-3-methylglutaryl-CoA into acetyl-CoA and acetoacetate, a key step in ketogenesis, the products of which support energy production in nonhepatic animal tissues.</text>
</comment>
<comment type="catalytic activity">
    <reaction evidence="3 4">
        <text>(3S)-3-hydroxy-3-methylglutaryl-CoA = acetoacetate + acetyl-CoA</text>
        <dbReference type="Rhea" id="RHEA:24404"/>
        <dbReference type="ChEBI" id="CHEBI:13705"/>
        <dbReference type="ChEBI" id="CHEBI:43074"/>
        <dbReference type="ChEBI" id="CHEBI:57288"/>
        <dbReference type="EC" id="4.1.3.4"/>
    </reaction>
</comment>
<comment type="cofactor">
    <cofactor evidence="9">
        <name>a divalent metal cation</name>
        <dbReference type="ChEBI" id="CHEBI:60240"/>
    </cofactor>
</comment>
<comment type="biophysicochemical properties">
    <kinetics>
        <KM evidence="3">40 uM for (S)-3-hydroxy-3-methylglutaryl-CoA (at pH 9)</KM>
        <KM evidence="3">75 uM for (S)-3-hydroxy-3-methylglutaryl-CoA (at pH 8)</KM>
        <KM evidence="4">28 uM for (S)-3-hydroxy-3-methylglutaryl-CoA</KM>
        <KM evidence="4">49 uM for (S)-3-hydroxy-3-methylglutaryl-CoA (in presence of magnesium)</KM>
        <KM evidence="4">0.18 uM for (S)-3-hydroxy-3-methylglutaryl-CoA (in presence of manganese)</KM>
        <Vmax evidence="3">12.0 nmol/min/mg enzyme with (S)-3-hydroxy-3-methylglutaryl-CoA as substrate at pH 9</Vmax>
        <Vmax evidence="3">25.0 nmol/min/mg enzyme with (S)-3-hydroxy-3-methylglutaryl-CoA as substrate at pH 8</Vmax>
    </kinetics>
</comment>
<comment type="pathway">
    <text>Metabolic intermediate metabolism; (S)-3-hydroxy-3-methylglutaryl-CoA degradation; acetoacetate from (S)-3-hydroxy-3-methylglutaryl-CoA: step 1/1.</text>
</comment>
<comment type="subcellular location">
    <subcellularLocation>
        <location evidence="3">Cytoplasm</location>
        <location evidence="3">Cytosol</location>
    </subcellularLocation>
    <subcellularLocation>
        <location evidence="3">Endoplasmic reticulum membrane</location>
        <topology>Peripheral membrane protein</topology>
    </subcellularLocation>
</comment>
<comment type="alternative products">
    <event type="alternative splicing"/>
    <isoform>
        <id>Q8TB92-1</id>
        <name>1</name>
        <sequence type="displayed"/>
    </isoform>
    <isoform>
        <id>Q8TB92-2</id>
        <name>2</name>
        <sequence type="described" ref="VSP_033752"/>
    </isoform>
    <isoform>
        <id>Q8TB92-4</id>
        <name>3</name>
        <sequence type="described" ref="VSP_038021 VSP_038022"/>
    </isoform>
    <isoform>
        <id>Q8TB92-5</id>
        <name>4</name>
        <sequence type="described" ref="VSP_033752 VSP_044324"/>
    </isoform>
</comment>
<comment type="miscellaneous">
    <molecule>Isoform 3</molecule>
    <text evidence="8">May be produced at very low levels due to a premature stop codon in the mRNA, leading to nonsense-mediated mRNA decay.</text>
</comment>
<comment type="similarity">
    <text evidence="8">Belongs to the HMG-CoA lyase family.</text>
</comment>
<comment type="sequence caution" evidence="8">
    <conflict type="frameshift">
        <sequence resource="EMBL-CDS" id="BAC87045"/>
    </conflict>
</comment>
<comment type="sequence caution" evidence="8">
    <conflict type="erroneous translation">
        <sequence resource="EMBL-CDS" id="BAG51462"/>
    </conflict>
    <text>Wrong choice of CDS.</text>
</comment>
<name>HMGC2_HUMAN</name>
<reference key="1">
    <citation type="journal article" date="2004" name="Nat. Genet.">
        <title>Complete sequencing and characterization of 21,243 full-length human cDNAs.</title>
        <authorList>
            <person name="Ota T."/>
            <person name="Suzuki Y."/>
            <person name="Nishikawa T."/>
            <person name="Otsuki T."/>
            <person name="Sugiyama T."/>
            <person name="Irie R."/>
            <person name="Wakamatsu A."/>
            <person name="Hayashi K."/>
            <person name="Sato H."/>
            <person name="Nagai K."/>
            <person name="Kimura K."/>
            <person name="Makita H."/>
            <person name="Sekine M."/>
            <person name="Obayashi M."/>
            <person name="Nishi T."/>
            <person name="Shibahara T."/>
            <person name="Tanaka T."/>
            <person name="Ishii S."/>
            <person name="Yamamoto J."/>
            <person name="Saito K."/>
            <person name="Kawai Y."/>
            <person name="Isono Y."/>
            <person name="Nakamura Y."/>
            <person name="Nagahari K."/>
            <person name="Murakami K."/>
            <person name="Yasuda T."/>
            <person name="Iwayanagi T."/>
            <person name="Wagatsuma M."/>
            <person name="Shiratori A."/>
            <person name="Sudo H."/>
            <person name="Hosoiri T."/>
            <person name="Kaku Y."/>
            <person name="Kodaira H."/>
            <person name="Kondo H."/>
            <person name="Sugawara M."/>
            <person name="Takahashi M."/>
            <person name="Kanda K."/>
            <person name="Yokoi T."/>
            <person name="Furuya T."/>
            <person name="Kikkawa E."/>
            <person name="Omura Y."/>
            <person name="Abe K."/>
            <person name="Kamihara K."/>
            <person name="Katsuta N."/>
            <person name="Sato K."/>
            <person name="Tanikawa M."/>
            <person name="Yamazaki M."/>
            <person name="Ninomiya K."/>
            <person name="Ishibashi T."/>
            <person name="Yamashita H."/>
            <person name="Murakawa K."/>
            <person name="Fujimori K."/>
            <person name="Tanai H."/>
            <person name="Kimata M."/>
            <person name="Watanabe M."/>
            <person name="Hiraoka S."/>
            <person name="Chiba Y."/>
            <person name="Ishida S."/>
            <person name="Ono Y."/>
            <person name="Takiguchi S."/>
            <person name="Watanabe S."/>
            <person name="Yosida M."/>
            <person name="Hotuta T."/>
            <person name="Kusano J."/>
            <person name="Kanehori K."/>
            <person name="Takahashi-Fujii A."/>
            <person name="Hara H."/>
            <person name="Tanase T.-O."/>
            <person name="Nomura Y."/>
            <person name="Togiya S."/>
            <person name="Komai F."/>
            <person name="Hara R."/>
            <person name="Takeuchi K."/>
            <person name="Arita M."/>
            <person name="Imose N."/>
            <person name="Musashino K."/>
            <person name="Yuuki H."/>
            <person name="Oshima A."/>
            <person name="Sasaki N."/>
            <person name="Aotsuka S."/>
            <person name="Yoshikawa Y."/>
            <person name="Matsunawa H."/>
            <person name="Ichihara T."/>
            <person name="Shiohata N."/>
            <person name="Sano S."/>
            <person name="Moriya S."/>
            <person name="Momiyama H."/>
            <person name="Satoh N."/>
            <person name="Takami S."/>
            <person name="Terashima Y."/>
            <person name="Suzuki O."/>
            <person name="Nakagawa S."/>
            <person name="Senoh A."/>
            <person name="Mizoguchi H."/>
            <person name="Goto Y."/>
            <person name="Shimizu F."/>
            <person name="Wakebe H."/>
            <person name="Hishigaki H."/>
            <person name="Watanabe T."/>
            <person name="Sugiyama A."/>
            <person name="Takemoto M."/>
            <person name="Kawakami B."/>
            <person name="Yamazaki M."/>
            <person name="Watanabe K."/>
            <person name="Kumagai A."/>
            <person name="Itakura S."/>
            <person name="Fukuzumi Y."/>
            <person name="Fujimori Y."/>
            <person name="Komiyama M."/>
            <person name="Tashiro H."/>
            <person name="Tanigami A."/>
            <person name="Fujiwara T."/>
            <person name="Ono T."/>
            <person name="Yamada K."/>
            <person name="Fujii Y."/>
            <person name="Ozaki K."/>
            <person name="Hirao M."/>
            <person name="Ohmori Y."/>
            <person name="Kawabata A."/>
            <person name="Hikiji T."/>
            <person name="Kobatake N."/>
            <person name="Inagaki H."/>
            <person name="Ikema Y."/>
            <person name="Okamoto S."/>
            <person name="Okitani R."/>
            <person name="Kawakami T."/>
            <person name="Noguchi S."/>
            <person name="Itoh T."/>
            <person name="Shigeta K."/>
            <person name="Senba T."/>
            <person name="Matsumura K."/>
            <person name="Nakajima Y."/>
            <person name="Mizuno T."/>
            <person name="Morinaga M."/>
            <person name="Sasaki M."/>
            <person name="Togashi T."/>
            <person name="Oyama M."/>
            <person name="Hata H."/>
            <person name="Watanabe M."/>
            <person name="Komatsu T."/>
            <person name="Mizushima-Sugano J."/>
            <person name="Satoh T."/>
            <person name="Shirai Y."/>
            <person name="Takahashi Y."/>
            <person name="Nakagawa K."/>
            <person name="Okumura K."/>
            <person name="Nagase T."/>
            <person name="Nomura N."/>
            <person name="Kikuchi H."/>
            <person name="Masuho Y."/>
            <person name="Yamashita R."/>
            <person name="Nakai K."/>
            <person name="Yada T."/>
            <person name="Nakamura Y."/>
            <person name="Ohara O."/>
            <person name="Isogai T."/>
            <person name="Sugano S."/>
        </authorList>
    </citation>
    <scope>NUCLEOTIDE SEQUENCE [LARGE SCALE MRNA] (ISOFORMS 1; 3 AND 4)</scope>
    <source>
        <tissue>Brain</tissue>
        <tissue>Cerebellum</tissue>
    </source>
</reference>
<reference key="2">
    <citation type="journal article" date="2003" name="Nature">
        <title>The DNA sequence and analysis of human chromosome 6.</title>
        <authorList>
            <person name="Mungall A.J."/>
            <person name="Palmer S.A."/>
            <person name="Sims S.K."/>
            <person name="Edwards C.A."/>
            <person name="Ashurst J.L."/>
            <person name="Wilming L."/>
            <person name="Jones M.C."/>
            <person name="Horton R."/>
            <person name="Hunt S.E."/>
            <person name="Scott C.E."/>
            <person name="Gilbert J.G.R."/>
            <person name="Clamp M.E."/>
            <person name="Bethel G."/>
            <person name="Milne S."/>
            <person name="Ainscough R."/>
            <person name="Almeida J.P."/>
            <person name="Ambrose K.D."/>
            <person name="Andrews T.D."/>
            <person name="Ashwell R.I.S."/>
            <person name="Babbage A.K."/>
            <person name="Bagguley C.L."/>
            <person name="Bailey J."/>
            <person name="Banerjee R."/>
            <person name="Barker D.J."/>
            <person name="Barlow K.F."/>
            <person name="Bates K."/>
            <person name="Beare D.M."/>
            <person name="Beasley H."/>
            <person name="Beasley O."/>
            <person name="Bird C.P."/>
            <person name="Blakey S.E."/>
            <person name="Bray-Allen S."/>
            <person name="Brook J."/>
            <person name="Brown A.J."/>
            <person name="Brown J.Y."/>
            <person name="Burford D.C."/>
            <person name="Burrill W."/>
            <person name="Burton J."/>
            <person name="Carder C."/>
            <person name="Carter N.P."/>
            <person name="Chapman J.C."/>
            <person name="Clark S.Y."/>
            <person name="Clark G."/>
            <person name="Clee C.M."/>
            <person name="Clegg S."/>
            <person name="Cobley V."/>
            <person name="Collier R.E."/>
            <person name="Collins J.E."/>
            <person name="Colman L.K."/>
            <person name="Corby N.R."/>
            <person name="Coville G.J."/>
            <person name="Culley K.M."/>
            <person name="Dhami P."/>
            <person name="Davies J."/>
            <person name="Dunn M."/>
            <person name="Earthrowl M.E."/>
            <person name="Ellington A.E."/>
            <person name="Evans K.A."/>
            <person name="Faulkner L."/>
            <person name="Francis M.D."/>
            <person name="Frankish A."/>
            <person name="Frankland J."/>
            <person name="French L."/>
            <person name="Garner P."/>
            <person name="Garnett J."/>
            <person name="Ghori M.J."/>
            <person name="Gilby L.M."/>
            <person name="Gillson C.J."/>
            <person name="Glithero R.J."/>
            <person name="Grafham D.V."/>
            <person name="Grant M."/>
            <person name="Gribble S."/>
            <person name="Griffiths C."/>
            <person name="Griffiths M.N.D."/>
            <person name="Hall R."/>
            <person name="Halls K.S."/>
            <person name="Hammond S."/>
            <person name="Harley J.L."/>
            <person name="Hart E.A."/>
            <person name="Heath P.D."/>
            <person name="Heathcott R."/>
            <person name="Holmes S.J."/>
            <person name="Howden P.J."/>
            <person name="Howe K.L."/>
            <person name="Howell G.R."/>
            <person name="Huckle E."/>
            <person name="Humphray S.J."/>
            <person name="Humphries M.D."/>
            <person name="Hunt A.R."/>
            <person name="Johnson C.M."/>
            <person name="Joy A.A."/>
            <person name="Kay M."/>
            <person name="Keenan S.J."/>
            <person name="Kimberley A.M."/>
            <person name="King A."/>
            <person name="Laird G.K."/>
            <person name="Langford C."/>
            <person name="Lawlor S."/>
            <person name="Leongamornlert D.A."/>
            <person name="Leversha M."/>
            <person name="Lloyd C.R."/>
            <person name="Lloyd D.M."/>
            <person name="Loveland J.E."/>
            <person name="Lovell J."/>
            <person name="Martin S."/>
            <person name="Mashreghi-Mohammadi M."/>
            <person name="Maslen G.L."/>
            <person name="Matthews L."/>
            <person name="McCann O.T."/>
            <person name="McLaren S.J."/>
            <person name="McLay K."/>
            <person name="McMurray A."/>
            <person name="Moore M.J.F."/>
            <person name="Mullikin J.C."/>
            <person name="Niblett D."/>
            <person name="Nickerson T."/>
            <person name="Novik K.L."/>
            <person name="Oliver K."/>
            <person name="Overton-Larty E.K."/>
            <person name="Parker A."/>
            <person name="Patel R."/>
            <person name="Pearce A.V."/>
            <person name="Peck A.I."/>
            <person name="Phillimore B.J.C.T."/>
            <person name="Phillips S."/>
            <person name="Plumb R.W."/>
            <person name="Porter K.M."/>
            <person name="Ramsey Y."/>
            <person name="Ranby S.A."/>
            <person name="Rice C.M."/>
            <person name="Ross M.T."/>
            <person name="Searle S.M."/>
            <person name="Sehra H.K."/>
            <person name="Sheridan E."/>
            <person name="Skuce C.D."/>
            <person name="Smith S."/>
            <person name="Smith M."/>
            <person name="Spraggon L."/>
            <person name="Squares S.L."/>
            <person name="Steward C.A."/>
            <person name="Sycamore N."/>
            <person name="Tamlyn-Hall G."/>
            <person name="Tester J."/>
            <person name="Theaker A.J."/>
            <person name="Thomas D.W."/>
            <person name="Thorpe A."/>
            <person name="Tracey A."/>
            <person name="Tromans A."/>
            <person name="Tubby B."/>
            <person name="Wall M."/>
            <person name="Wallis J.M."/>
            <person name="West A.P."/>
            <person name="White S.S."/>
            <person name="Whitehead S.L."/>
            <person name="Whittaker H."/>
            <person name="Wild A."/>
            <person name="Willey D.J."/>
            <person name="Wilmer T.E."/>
            <person name="Wood J.M."/>
            <person name="Wray P.W."/>
            <person name="Wyatt J.C."/>
            <person name="Young L."/>
            <person name="Younger R.M."/>
            <person name="Bentley D.R."/>
            <person name="Coulson A."/>
            <person name="Durbin R.M."/>
            <person name="Hubbard T."/>
            <person name="Sulston J.E."/>
            <person name="Dunham I."/>
            <person name="Rogers J."/>
            <person name="Beck S."/>
        </authorList>
    </citation>
    <scope>NUCLEOTIDE SEQUENCE [LARGE SCALE GENOMIC DNA]</scope>
</reference>
<reference key="3">
    <citation type="submission" date="2005-07" db="EMBL/GenBank/DDBJ databases">
        <authorList>
            <person name="Mural R.J."/>
            <person name="Istrail S."/>
            <person name="Sutton G.G."/>
            <person name="Florea L."/>
            <person name="Halpern A.L."/>
            <person name="Mobarry C.M."/>
            <person name="Lippert R."/>
            <person name="Walenz B."/>
            <person name="Shatkay H."/>
            <person name="Dew I."/>
            <person name="Miller J.R."/>
            <person name="Flanigan M.J."/>
            <person name="Edwards N.J."/>
            <person name="Bolanos R."/>
            <person name="Fasulo D."/>
            <person name="Halldorsson B.V."/>
            <person name="Hannenhalli S."/>
            <person name="Turner R."/>
            <person name="Yooseph S."/>
            <person name="Lu F."/>
            <person name="Nusskern D.R."/>
            <person name="Shue B.C."/>
            <person name="Zheng X.H."/>
            <person name="Zhong F."/>
            <person name="Delcher A.L."/>
            <person name="Huson D.H."/>
            <person name="Kravitz S.A."/>
            <person name="Mouchard L."/>
            <person name="Reinert K."/>
            <person name="Remington K.A."/>
            <person name="Clark A.G."/>
            <person name="Waterman M.S."/>
            <person name="Eichler E.E."/>
            <person name="Adams M.D."/>
            <person name="Hunkapiller M.W."/>
            <person name="Myers E.W."/>
            <person name="Venter J.C."/>
        </authorList>
    </citation>
    <scope>NUCLEOTIDE SEQUENCE [LARGE SCALE GENOMIC DNA]</scope>
</reference>
<reference key="4">
    <citation type="journal article" date="2004" name="Genome Res.">
        <title>The status, quality, and expansion of the NIH full-length cDNA project: the Mammalian Gene Collection (MGC).</title>
        <authorList>
            <consortium name="The MGC Project Team"/>
        </authorList>
    </citation>
    <scope>NUCLEOTIDE SEQUENCE [LARGE SCALE MRNA] (ISOFORM 2)</scope>
    <source>
        <tissue>Brain</tissue>
    </source>
</reference>
<reference key="5">
    <citation type="journal article" date="2012" name="J. Biol. Chem.">
        <title>Identification and characterization of an extramitochondrial human 3-Hydroxy-3-methylglutaryl-CoA lyase.</title>
        <authorList>
            <person name="Montgomery C."/>
            <person name="Pei Z."/>
            <person name="Watkins P.A."/>
            <person name="Miziorko H.M."/>
        </authorList>
    </citation>
    <scope>FUNCTION</scope>
    <scope>CATALYTIC ACTIVITY</scope>
    <scope>BIOPHYSICOCHEMICAL PROPERTIES</scope>
    <scope>COFACTOR</scope>
    <scope>SUBCELLULAR LOCATION</scope>
    <scope>MYRISTOYLATION AT GLY-2</scope>
    <scope>MUTAGENESIS OF GLY-2</scope>
</reference>
<reference key="6">
    <citation type="journal article" date="2012" name="J. Lipid Res.">
        <title>Characterization of a novel HMG-CoA Lyase enzyme with a dual location in endoplasmic reticulum and cytosol.</title>
        <authorList>
            <person name="Arnedo M."/>
            <person name="Menao S."/>
            <person name="Puisac B."/>
            <person name="Teresa-Rodrigo M.E."/>
            <person name="Gil-Rodriguez M.C."/>
            <person name="Lopez-Vinas E."/>
            <person name="Gomez-Puertas P."/>
            <person name="Casals N."/>
            <person name="Casale C.H."/>
            <person name="Hegardt F.G."/>
            <person name="Pie J."/>
        </authorList>
    </citation>
    <scope>FUNCTION</scope>
    <scope>CATALYTIC ACTIVITY</scope>
    <scope>SUBCELLULAR LOCATION</scope>
    <scope>BIOPHYSICOCHEMICAL PROPERTIES</scope>
    <scope>MUTAGENESIS OF ARG-86; LEU-237 AND HIS-278</scope>
</reference>
<gene>
    <name type="primary">HMGCLL1</name>
</gene>
<organism>
    <name type="scientific">Homo sapiens</name>
    <name type="common">Human</name>
    <dbReference type="NCBI Taxonomy" id="9606"/>
    <lineage>
        <taxon>Eukaryota</taxon>
        <taxon>Metazoa</taxon>
        <taxon>Chordata</taxon>
        <taxon>Craniata</taxon>
        <taxon>Vertebrata</taxon>
        <taxon>Euteleostomi</taxon>
        <taxon>Mammalia</taxon>
        <taxon>Eutheria</taxon>
        <taxon>Euarchontoglires</taxon>
        <taxon>Primates</taxon>
        <taxon>Haplorrhini</taxon>
        <taxon>Catarrhini</taxon>
        <taxon>Hominidae</taxon>
        <taxon>Homo</taxon>
    </lineage>
</organism>
<feature type="initiator methionine" description="Removed">
    <location>
        <position position="1"/>
    </location>
</feature>
<feature type="chain" id="PRO_0000334669" description="3-hydroxy-3-methylglutaryl-CoA lyase, cytoplasmic">
    <location>
        <begin position="2"/>
        <end position="370"/>
    </location>
</feature>
<feature type="domain" description="Pyruvate carboxyltransferase" evidence="2">
    <location>
        <begin position="78"/>
        <end position="345"/>
    </location>
</feature>
<feature type="active site" evidence="1">
    <location>
        <position position="311"/>
    </location>
</feature>
<feature type="binding site" evidence="1">
    <location>
        <position position="86"/>
    </location>
    <ligand>
        <name>substrate</name>
    </ligand>
</feature>
<feature type="binding site" evidence="1">
    <location>
        <position position="87"/>
    </location>
    <ligand>
        <name>a divalent metal cation</name>
        <dbReference type="ChEBI" id="CHEBI:60240"/>
    </ligand>
</feature>
<feature type="binding site" evidence="1">
    <location>
        <position position="278"/>
    </location>
    <ligand>
        <name>a divalent metal cation</name>
        <dbReference type="ChEBI" id="CHEBI:60240"/>
    </ligand>
</feature>
<feature type="binding site" evidence="1">
    <location>
        <position position="280"/>
    </location>
    <ligand>
        <name>a divalent metal cation</name>
        <dbReference type="ChEBI" id="CHEBI:60240"/>
    </ligand>
</feature>
<feature type="binding site" evidence="1">
    <location>
        <position position="320"/>
    </location>
    <ligand>
        <name>a divalent metal cation</name>
        <dbReference type="ChEBI" id="CHEBI:60240"/>
    </ligand>
</feature>
<feature type="lipid moiety-binding region" description="N-myristoyl glycine" evidence="4">
    <location>
        <position position="2"/>
    </location>
</feature>
<feature type="splice variant" id="VSP_033752" description="In isoform 2 and isoform 4." evidence="5 6">
    <location>
        <begin position="37"/>
        <end position="66"/>
    </location>
</feature>
<feature type="splice variant" id="VSP_038021" description="In isoform 3." evidence="5">
    <original>TSLLTNLHCFQPDVSGF</original>
    <variation>ELQSVMLMLHHGPLRKP</variation>
    <location>
        <begin position="37"/>
        <end position="53"/>
    </location>
</feature>
<feature type="splice variant" id="VSP_038022" description="In isoform 3." evidence="5">
    <location>
        <begin position="54"/>
        <end position="370"/>
    </location>
</feature>
<feature type="splice variant" id="VSP_044324" description="In isoform 4." evidence="5">
    <location>
        <begin position="130"/>
        <end position="161"/>
    </location>
</feature>
<feature type="mutagenesis site" description="Abolishes myristoylation and induces a subcellular location change." evidence="4">
    <original>G</original>
    <variation>A</variation>
    <location>
        <position position="2"/>
    </location>
</feature>
<feature type="mutagenesis site" description="Abolishes catalytic activity." evidence="3">
    <original>R</original>
    <variation>Q</variation>
    <location>
        <position position="86"/>
    </location>
</feature>
<feature type="mutagenesis site" description="Abolishes catalytic activity." evidence="3">
    <original>L</original>
    <variation>S</variation>
    <location>
        <position position="237"/>
    </location>
</feature>
<feature type="mutagenesis site" description="Abolishes catalytic activity." evidence="3">
    <original>H</original>
    <variation>R</variation>
    <location>
        <position position="278"/>
    </location>
</feature>
<feature type="sequence conflict" description="In Ref. 1; BAH11613." evidence="8" ref="1">
    <original>D</original>
    <variation>G</variation>
    <location>
        <position position="99"/>
    </location>
</feature>
<dbReference type="EC" id="4.1.3.4" evidence="3 4"/>
<dbReference type="EMBL" id="AK055075">
    <property type="protein sequence ID" value="BAG51462.1"/>
    <property type="status" value="ALT_SEQ"/>
    <property type="molecule type" value="mRNA"/>
</dbReference>
<dbReference type="EMBL" id="AK127587">
    <property type="protein sequence ID" value="BAC87045.1"/>
    <property type="status" value="ALT_FRAME"/>
    <property type="molecule type" value="mRNA"/>
</dbReference>
<dbReference type="EMBL" id="AK293856">
    <property type="protein sequence ID" value="BAH11613.1"/>
    <property type="molecule type" value="mRNA"/>
</dbReference>
<dbReference type="EMBL" id="AL590290">
    <property type="status" value="NOT_ANNOTATED_CDS"/>
    <property type="molecule type" value="Genomic_DNA"/>
</dbReference>
<dbReference type="EMBL" id="AL590406">
    <property type="status" value="NOT_ANNOTATED_CDS"/>
    <property type="molecule type" value="Genomic_DNA"/>
</dbReference>
<dbReference type="EMBL" id="CH471081">
    <property type="protein sequence ID" value="EAX04442.1"/>
    <property type="molecule type" value="Genomic_DNA"/>
</dbReference>
<dbReference type="EMBL" id="CH471081">
    <property type="protein sequence ID" value="EAX04444.1"/>
    <property type="molecule type" value="Genomic_DNA"/>
</dbReference>
<dbReference type="EMBL" id="BC024194">
    <property type="protein sequence ID" value="AAH24194.2"/>
    <property type="molecule type" value="mRNA"/>
</dbReference>
<dbReference type="CCDS" id="CCDS43474.1">
    <molecule id="Q8TB92-2"/>
</dbReference>
<dbReference type="CCDS" id="CCDS43475.1">
    <molecule id="Q8TB92-1"/>
</dbReference>
<dbReference type="CCDS" id="CCDS75473.1">
    <molecule id="Q8TB92-5"/>
</dbReference>
<dbReference type="RefSeq" id="NP_001035865.1">
    <molecule id="Q8TB92-2"/>
    <property type="nucleotide sequence ID" value="NM_001042406.2"/>
</dbReference>
<dbReference type="RefSeq" id="NP_001274670.1">
    <molecule id="Q8TB92-5"/>
    <property type="nucleotide sequence ID" value="NM_001287741.2"/>
</dbReference>
<dbReference type="RefSeq" id="NP_001274675.1">
    <property type="nucleotide sequence ID" value="NM_001287746.1"/>
</dbReference>
<dbReference type="RefSeq" id="NP_061909.2">
    <molecule id="Q8TB92-1"/>
    <property type="nucleotide sequence ID" value="NM_019036.3"/>
</dbReference>
<dbReference type="SMR" id="Q8TB92"/>
<dbReference type="BioGRID" id="120006">
    <property type="interactions" value="21"/>
</dbReference>
<dbReference type="FunCoup" id="Q8TB92">
    <property type="interactions" value="714"/>
</dbReference>
<dbReference type="IntAct" id="Q8TB92">
    <property type="interactions" value="13"/>
</dbReference>
<dbReference type="STRING" id="9606.ENSP00000381654"/>
<dbReference type="SwissLipids" id="SLP:000001291">
    <molecule id="Q8TB92-2"/>
</dbReference>
<dbReference type="iPTMnet" id="Q8TB92"/>
<dbReference type="PhosphoSitePlus" id="Q8TB92"/>
<dbReference type="BioMuta" id="HMGCLL1"/>
<dbReference type="DMDM" id="189028466"/>
<dbReference type="jPOST" id="Q8TB92"/>
<dbReference type="MassIVE" id="Q8TB92"/>
<dbReference type="PaxDb" id="9606-ENSP00000381654"/>
<dbReference type="PeptideAtlas" id="Q8TB92"/>
<dbReference type="ProteomicsDB" id="29914"/>
<dbReference type="ProteomicsDB" id="73974">
    <molecule id="Q8TB92-1"/>
</dbReference>
<dbReference type="ProteomicsDB" id="73975">
    <molecule id="Q8TB92-2"/>
</dbReference>
<dbReference type="Antibodypedia" id="31030">
    <property type="antibodies" value="53 antibodies from 13 providers"/>
</dbReference>
<dbReference type="DNASU" id="54511"/>
<dbReference type="Ensembl" id="ENST00000274901.9">
    <molecule id="Q8TB92-2"/>
    <property type="protein sequence ID" value="ENSP00000274901.4"/>
    <property type="gene ID" value="ENSG00000146151.14"/>
</dbReference>
<dbReference type="Ensembl" id="ENST00000308161.8">
    <molecule id="Q8TB92-5"/>
    <property type="protein sequence ID" value="ENSP00000309737.4"/>
    <property type="gene ID" value="ENSG00000146151.14"/>
</dbReference>
<dbReference type="Ensembl" id="ENST00000370852.6">
    <molecule id="Q8TB92-4"/>
    <property type="protein sequence ID" value="ENSP00000359889.2"/>
    <property type="gene ID" value="ENSG00000146151.14"/>
</dbReference>
<dbReference type="Ensembl" id="ENST00000398661.6">
    <molecule id="Q8TB92-1"/>
    <property type="protein sequence ID" value="ENSP00000381654.2"/>
    <property type="gene ID" value="ENSG00000146151.14"/>
</dbReference>
<dbReference type="GeneID" id="54511"/>
<dbReference type="KEGG" id="hsa:54511"/>
<dbReference type="MANE-Select" id="ENST00000274901.9">
    <molecule id="Q8TB92-2"/>
    <property type="protein sequence ID" value="ENSP00000274901.4"/>
    <property type="RefSeq nucleotide sequence ID" value="NM_001042406.2"/>
    <property type="RefSeq protein sequence ID" value="NP_001035865.1"/>
</dbReference>
<dbReference type="UCSC" id="uc003pcn.4">
    <molecule id="Q8TB92-1"/>
    <property type="organism name" value="human"/>
</dbReference>
<dbReference type="AGR" id="HGNC:21359"/>
<dbReference type="CTD" id="54511"/>
<dbReference type="DisGeNET" id="54511"/>
<dbReference type="GeneCards" id="HMGCLL1"/>
<dbReference type="HGNC" id="HGNC:21359">
    <property type="gene designation" value="HMGCLL1"/>
</dbReference>
<dbReference type="HPA" id="ENSG00000146151">
    <property type="expression patterns" value="Tissue enhanced (brain)"/>
</dbReference>
<dbReference type="MIM" id="619050">
    <property type="type" value="gene"/>
</dbReference>
<dbReference type="neXtProt" id="NX_Q8TB92"/>
<dbReference type="OpenTargets" id="ENSG00000146151"/>
<dbReference type="PharmGKB" id="PA134989971"/>
<dbReference type="VEuPathDB" id="HostDB:ENSG00000146151"/>
<dbReference type="eggNOG" id="KOG2368">
    <property type="taxonomic scope" value="Eukaryota"/>
</dbReference>
<dbReference type="GeneTree" id="ENSGT00940000159467"/>
<dbReference type="HOGENOM" id="CLU_214024_0_0_1"/>
<dbReference type="InParanoid" id="Q8TB92"/>
<dbReference type="OMA" id="VATAWDC"/>
<dbReference type="OrthoDB" id="1905920at2759"/>
<dbReference type="PAN-GO" id="Q8TB92">
    <property type="GO annotations" value="6 GO annotations based on evolutionary models"/>
</dbReference>
<dbReference type="PhylomeDB" id="Q8TB92"/>
<dbReference type="TreeFam" id="TF105363"/>
<dbReference type="PathwayCommons" id="Q8TB92"/>
<dbReference type="Reactome" id="R-HSA-77111">
    <property type="pathway name" value="Synthesis of Ketone Bodies"/>
</dbReference>
<dbReference type="SABIO-RK" id="Q8TB92"/>
<dbReference type="SignaLink" id="Q8TB92"/>
<dbReference type="UniPathway" id="UPA00896">
    <property type="reaction ID" value="UER00863"/>
</dbReference>
<dbReference type="BioGRID-ORCS" id="54511">
    <property type="hits" value="39 hits in 1138 CRISPR screens"/>
</dbReference>
<dbReference type="ChiTaRS" id="HMGCLL1">
    <property type="organism name" value="human"/>
</dbReference>
<dbReference type="GenomeRNAi" id="54511"/>
<dbReference type="Pharos" id="Q8TB92">
    <property type="development level" value="Tbio"/>
</dbReference>
<dbReference type="PRO" id="PR:Q8TB92"/>
<dbReference type="Proteomes" id="UP000005640">
    <property type="component" value="Chromosome 6"/>
</dbReference>
<dbReference type="RNAct" id="Q8TB92">
    <property type="molecule type" value="protein"/>
</dbReference>
<dbReference type="Bgee" id="ENSG00000146151">
    <property type="expression patterns" value="Expressed in cortical plate and 138 other cell types or tissues"/>
</dbReference>
<dbReference type="ExpressionAtlas" id="Q8TB92">
    <property type="expression patterns" value="baseline and differential"/>
</dbReference>
<dbReference type="GO" id="GO:0005829">
    <property type="term" value="C:cytosol"/>
    <property type="evidence" value="ECO:0000314"/>
    <property type="project" value="UniProtKB"/>
</dbReference>
<dbReference type="GO" id="GO:0005783">
    <property type="term" value="C:endoplasmic reticulum"/>
    <property type="evidence" value="ECO:0000314"/>
    <property type="project" value="UniProtKB"/>
</dbReference>
<dbReference type="GO" id="GO:0005789">
    <property type="term" value="C:endoplasmic reticulum membrane"/>
    <property type="evidence" value="ECO:0007669"/>
    <property type="project" value="UniProtKB-SubCell"/>
</dbReference>
<dbReference type="GO" id="GO:0016020">
    <property type="term" value="C:membrane"/>
    <property type="evidence" value="ECO:0000314"/>
    <property type="project" value="UniProtKB"/>
</dbReference>
<dbReference type="GO" id="GO:0048471">
    <property type="term" value="C:perinuclear region of cytoplasm"/>
    <property type="evidence" value="ECO:0000314"/>
    <property type="project" value="UniProtKB"/>
</dbReference>
<dbReference type="GO" id="GO:0004419">
    <property type="term" value="F:hydroxymethylglutaryl-CoA lyase activity"/>
    <property type="evidence" value="ECO:0000314"/>
    <property type="project" value="UniProtKB"/>
</dbReference>
<dbReference type="GO" id="GO:0046872">
    <property type="term" value="F:metal ion binding"/>
    <property type="evidence" value="ECO:0000250"/>
    <property type="project" value="UniProtKB"/>
</dbReference>
<dbReference type="GO" id="GO:0046951">
    <property type="term" value="P:ketone body biosynthetic process"/>
    <property type="evidence" value="ECO:0000314"/>
    <property type="project" value="UniProtKB"/>
</dbReference>
<dbReference type="GO" id="GO:0006552">
    <property type="term" value="P:L-leucine catabolic process"/>
    <property type="evidence" value="ECO:0000318"/>
    <property type="project" value="GO_Central"/>
</dbReference>
<dbReference type="CDD" id="cd07938">
    <property type="entry name" value="DRE_TIM_HMGL"/>
    <property type="match status" value="1"/>
</dbReference>
<dbReference type="FunFam" id="3.20.20.70:FF:000038">
    <property type="entry name" value="Hydroxymethylglutaryl-CoA lyase, mitochondrial"/>
    <property type="match status" value="1"/>
</dbReference>
<dbReference type="Gene3D" id="3.20.20.70">
    <property type="entry name" value="Aldolase class I"/>
    <property type="match status" value="1"/>
</dbReference>
<dbReference type="InterPro" id="IPR013785">
    <property type="entry name" value="Aldolase_TIM"/>
</dbReference>
<dbReference type="InterPro" id="IPR043594">
    <property type="entry name" value="HMGL"/>
</dbReference>
<dbReference type="InterPro" id="IPR000891">
    <property type="entry name" value="PYR_CT"/>
</dbReference>
<dbReference type="NCBIfam" id="NF004283">
    <property type="entry name" value="PRK05692.1"/>
    <property type="match status" value="1"/>
</dbReference>
<dbReference type="PANTHER" id="PTHR42738:SF5">
    <property type="entry name" value="3-HYDROXY-3-METHYLGLUTARYL-COA LYASE, CYTOPLASMIC"/>
    <property type="match status" value="1"/>
</dbReference>
<dbReference type="PANTHER" id="PTHR42738">
    <property type="entry name" value="HYDROXYMETHYLGLUTARYL-COA LYASE"/>
    <property type="match status" value="1"/>
</dbReference>
<dbReference type="Pfam" id="PF00682">
    <property type="entry name" value="HMGL-like"/>
    <property type="match status" value="1"/>
</dbReference>
<dbReference type="SUPFAM" id="SSF51569">
    <property type="entry name" value="Aldolase"/>
    <property type="match status" value="1"/>
</dbReference>
<dbReference type="PROSITE" id="PS50991">
    <property type="entry name" value="PYR_CT"/>
    <property type="match status" value="1"/>
</dbReference>
<accession>Q8TB92</accession>
<accession>B1AQ42</accession>
<accession>B3KNV0</accession>
<accession>B7Z1S7</accession>
<accession>F8W793</accession>
<accession>Q6ZSA9</accession>
<evidence type="ECO:0000250" key="1"/>
<evidence type="ECO:0000255" key="2">
    <source>
        <dbReference type="PROSITE-ProRule" id="PRU01151"/>
    </source>
</evidence>
<evidence type="ECO:0000269" key="3">
    <source>
    </source>
</evidence>
<evidence type="ECO:0000269" key="4">
    <source>
    </source>
</evidence>
<evidence type="ECO:0000303" key="5">
    <source>
    </source>
</evidence>
<evidence type="ECO:0000303" key="6">
    <source>
    </source>
</evidence>
<evidence type="ECO:0000303" key="7">
    <source>
    </source>
</evidence>
<evidence type="ECO:0000305" key="8"/>
<evidence type="ECO:0000305" key="9">
    <source>
    </source>
</evidence>
<protein>
    <recommendedName>
        <fullName>3-hydroxy-3-methylglutaryl-CoA lyase, cytoplasmic</fullName>
        <ecNumber evidence="3 4">4.1.3.4</ecNumber>
    </recommendedName>
    <alternativeName>
        <fullName>3-hydroxy-3-methylglutaryl-CoA lyase-like protein 1</fullName>
        <shortName>HMGCL-like 1</shortName>
    </alternativeName>
    <alternativeName>
        <fullName evidence="7">Endoplasmic reticulum 3-hydroxy-3-methylglutaryl-CoA lyase</fullName>
        <shortName evidence="7">er-cHL</shortName>
    </alternativeName>
</protein>
<keyword id="KW-0025">Alternative splicing</keyword>
<keyword id="KW-0963">Cytoplasm</keyword>
<keyword id="KW-0256">Endoplasmic reticulum</keyword>
<keyword id="KW-0443">Lipid metabolism</keyword>
<keyword id="KW-0449">Lipoprotein</keyword>
<keyword id="KW-0456">Lyase</keyword>
<keyword id="KW-0472">Membrane</keyword>
<keyword id="KW-0479">Metal-binding</keyword>
<keyword id="KW-0519">Myristate</keyword>
<keyword id="KW-1267">Proteomics identification</keyword>
<keyword id="KW-1185">Reference proteome</keyword>
<sequence>MGNVPSAVKHCLSYQQLLREHLWIGDSVAGALDPAQTSLLTNLHCFQPDVSGFSVSLAGTVACIHWETSQLSGLPEFVKIVEVGPRDGLQNEKVIVPTDIKIEFINRLSQTGLSVIEVTSFVSSRWVPQMADHTEVMKGIHQYPGVRYPVLTPNLQGFHHAVAAGATEISVFGAASESFSKKNINCSIEESMGKFEEVVKSARHMNIPARGYVSCALGCPYEGSITPQKVTEVSKRLYGMGCYEISLGDTIGVGTPGSMKRMLESVMKEIPPGALAVHCHDTYGQALANILTALQMGINVVDSAVSGLGGCPYAKGASGNVATEDLIYMLNGLGLNTGVNLYKVMEAGDFICKAVNKTTNSKVAQASFNA</sequence>